<gene>
    <name evidence="1" type="primary">acsA</name>
    <name type="ordered locus">BAbS19_I17000</name>
</gene>
<protein>
    <recommendedName>
        <fullName evidence="1">Acetyl-coenzyme A synthetase</fullName>
        <shortName evidence="1">AcCoA synthetase</shortName>
        <shortName evidence="1">Acs</shortName>
        <ecNumber evidence="1">6.2.1.1</ecNumber>
    </recommendedName>
    <alternativeName>
        <fullName evidence="1">Acetate--CoA ligase</fullName>
    </alternativeName>
    <alternativeName>
        <fullName evidence="1">Acyl-activating enzyme</fullName>
    </alternativeName>
</protein>
<comment type="function">
    <text evidence="1">Catalyzes the conversion of acetate into acetyl-CoA (AcCoA), an essential intermediate at the junction of anabolic and catabolic pathways. AcsA undergoes a two-step reaction. In the first half reaction, AcsA combines acetate with ATP to form acetyl-adenylate (AcAMP) intermediate. In the second half reaction, it can then transfer the acetyl group from AcAMP to the sulfhydryl group of CoA, forming the product AcCoA.</text>
</comment>
<comment type="catalytic activity">
    <reaction evidence="1">
        <text>acetate + ATP + CoA = acetyl-CoA + AMP + diphosphate</text>
        <dbReference type="Rhea" id="RHEA:23176"/>
        <dbReference type="ChEBI" id="CHEBI:30089"/>
        <dbReference type="ChEBI" id="CHEBI:30616"/>
        <dbReference type="ChEBI" id="CHEBI:33019"/>
        <dbReference type="ChEBI" id="CHEBI:57287"/>
        <dbReference type="ChEBI" id="CHEBI:57288"/>
        <dbReference type="ChEBI" id="CHEBI:456215"/>
        <dbReference type="EC" id="6.2.1.1"/>
    </reaction>
</comment>
<comment type="cofactor">
    <cofactor evidence="1">
        <name>Mg(2+)</name>
        <dbReference type="ChEBI" id="CHEBI:18420"/>
    </cofactor>
</comment>
<comment type="PTM">
    <text evidence="1">Acetylated. Deacetylation by the SIR2-homolog deacetylase activates the enzyme.</text>
</comment>
<comment type="similarity">
    <text evidence="1">Belongs to the ATP-dependent AMP-binding enzyme family.</text>
</comment>
<name>ACSA_BRUA1</name>
<organism>
    <name type="scientific">Brucella abortus (strain S19)</name>
    <dbReference type="NCBI Taxonomy" id="430066"/>
    <lineage>
        <taxon>Bacteria</taxon>
        <taxon>Pseudomonadati</taxon>
        <taxon>Pseudomonadota</taxon>
        <taxon>Alphaproteobacteria</taxon>
        <taxon>Hyphomicrobiales</taxon>
        <taxon>Brucellaceae</taxon>
        <taxon>Brucella/Ochrobactrum group</taxon>
        <taxon>Brucella</taxon>
    </lineage>
</organism>
<dbReference type="EC" id="6.2.1.1" evidence="1"/>
<dbReference type="EMBL" id="CP000887">
    <property type="protein sequence ID" value="ACD73182.1"/>
    <property type="molecule type" value="Genomic_DNA"/>
</dbReference>
<dbReference type="SMR" id="B2S7N5"/>
<dbReference type="KEGG" id="bmc:BAbS19_I17000"/>
<dbReference type="HOGENOM" id="CLU_000022_3_6_5"/>
<dbReference type="Proteomes" id="UP000002565">
    <property type="component" value="Chromosome 1"/>
</dbReference>
<dbReference type="GO" id="GO:0005829">
    <property type="term" value="C:cytosol"/>
    <property type="evidence" value="ECO:0007669"/>
    <property type="project" value="TreeGrafter"/>
</dbReference>
<dbReference type="GO" id="GO:0003987">
    <property type="term" value="F:acetate-CoA ligase activity"/>
    <property type="evidence" value="ECO:0007669"/>
    <property type="project" value="UniProtKB-UniRule"/>
</dbReference>
<dbReference type="GO" id="GO:0016208">
    <property type="term" value="F:AMP binding"/>
    <property type="evidence" value="ECO:0007669"/>
    <property type="project" value="InterPro"/>
</dbReference>
<dbReference type="GO" id="GO:0005524">
    <property type="term" value="F:ATP binding"/>
    <property type="evidence" value="ECO:0007669"/>
    <property type="project" value="UniProtKB-KW"/>
</dbReference>
<dbReference type="GO" id="GO:0046872">
    <property type="term" value="F:metal ion binding"/>
    <property type="evidence" value="ECO:0007669"/>
    <property type="project" value="UniProtKB-KW"/>
</dbReference>
<dbReference type="GO" id="GO:0019427">
    <property type="term" value="P:acetyl-CoA biosynthetic process from acetate"/>
    <property type="evidence" value="ECO:0007669"/>
    <property type="project" value="InterPro"/>
</dbReference>
<dbReference type="CDD" id="cd05966">
    <property type="entry name" value="ACS"/>
    <property type="match status" value="1"/>
</dbReference>
<dbReference type="FunFam" id="3.30.300.30:FF:000004">
    <property type="entry name" value="Acetyl-coenzyme A synthetase"/>
    <property type="match status" value="1"/>
</dbReference>
<dbReference type="FunFam" id="3.40.50.12780:FF:000001">
    <property type="entry name" value="Acetyl-coenzyme A synthetase"/>
    <property type="match status" value="1"/>
</dbReference>
<dbReference type="Gene3D" id="3.30.300.30">
    <property type="match status" value="1"/>
</dbReference>
<dbReference type="Gene3D" id="3.40.50.12780">
    <property type="entry name" value="N-terminal domain of ligase-like"/>
    <property type="match status" value="1"/>
</dbReference>
<dbReference type="HAMAP" id="MF_01123">
    <property type="entry name" value="Ac_CoA_synth"/>
    <property type="match status" value="1"/>
</dbReference>
<dbReference type="InterPro" id="IPR011904">
    <property type="entry name" value="Ac_CoA_lig"/>
</dbReference>
<dbReference type="InterPro" id="IPR032387">
    <property type="entry name" value="ACAS_N"/>
</dbReference>
<dbReference type="InterPro" id="IPR025110">
    <property type="entry name" value="AMP-bd_C"/>
</dbReference>
<dbReference type="InterPro" id="IPR045851">
    <property type="entry name" value="AMP-bd_C_sf"/>
</dbReference>
<dbReference type="InterPro" id="IPR020845">
    <property type="entry name" value="AMP-binding_CS"/>
</dbReference>
<dbReference type="InterPro" id="IPR000873">
    <property type="entry name" value="AMP-dep_synth/lig_dom"/>
</dbReference>
<dbReference type="InterPro" id="IPR042099">
    <property type="entry name" value="ANL_N_sf"/>
</dbReference>
<dbReference type="NCBIfam" id="TIGR02188">
    <property type="entry name" value="Ac_CoA_lig_AcsA"/>
    <property type="match status" value="1"/>
</dbReference>
<dbReference type="NCBIfam" id="NF001208">
    <property type="entry name" value="PRK00174.1"/>
    <property type="match status" value="1"/>
</dbReference>
<dbReference type="PANTHER" id="PTHR24095">
    <property type="entry name" value="ACETYL-COENZYME A SYNTHETASE"/>
    <property type="match status" value="1"/>
</dbReference>
<dbReference type="PANTHER" id="PTHR24095:SF14">
    <property type="entry name" value="ACETYL-COENZYME A SYNTHETASE 1"/>
    <property type="match status" value="1"/>
</dbReference>
<dbReference type="Pfam" id="PF16177">
    <property type="entry name" value="ACAS_N"/>
    <property type="match status" value="1"/>
</dbReference>
<dbReference type="Pfam" id="PF00501">
    <property type="entry name" value="AMP-binding"/>
    <property type="match status" value="1"/>
</dbReference>
<dbReference type="Pfam" id="PF13193">
    <property type="entry name" value="AMP-binding_C"/>
    <property type="match status" value="1"/>
</dbReference>
<dbReference type="SUPFAM" id="SSF56801">
    <property type="entry name" value="Acetyl-CoA synthetase-like"/>
    <property type="match status" value="1"/>
</dbReference>
<dbReference type="PROSITE" id="PS00455">
    <property type="entry name" value="AMP_BINDING"/>
    <property type="match status" value="1"/>
</dbReference>
<keyword id="KW-0007">Acetylation</keyword>
<keyword id="KW-0067">ATP-binding</keyword>
<keyword id="KW-0436">Ligase</keyword>
<keyword id="KW-0460">Magnesium</keyword>
<keyword id="KW-0479">Metal-binding</keyword>
<keyword id="KW-0547">Nucleotide-binding</keyword>
<proteinExistence type="inferred from homology"/>
<reference key="1">
    <citation type="journal article" date="2008" name="PLoS ONE">
        <title>Genome sequence of Brucella abortus vaccine strain S19 compared to virulent strains yields candidate virulence genes.</title>
        <authorList>
            <person name="Crasta O.R."/>
            <person name="Folkerts O."/>
            <person name="Fei Z."/>
            <person name="Mane S.P."/>
            <person name="Evans C."/>
            <person name="Martino-Catt S."/>
            <person name="Bricker B."/>
            <person name="Yu G."/>
            <person name="Du L."/>
            <person name="Sobral B.W."/>
        </authorList>
    </citation>
    <scope>NUCLEOTIDE SEQUENCE [LARGE SCALE GENOMIC DNA]</scope>
    <source>
        <strain>S19</strain>
    </source>
</reference>
<feature type="chain" id="PRO_1000137260" description="Acetyl-coenzyme A synthetase">
    <location>
        <begin position="1"/>
        <end position="651"/>
    </location>
</feature>
<feature type="binding site" evidence="1">
    <location>
        <begin position="189"/>
        <end position="192"/>
    </location>
    <ligand>
        <name>CoA</name>
        <dbReference type="ChEBI" id="CHEBI:57287"/>
    </ligand>
</feature>
<feature type="binding site" evidence="1">
    <location>
        <position position="311"/>
    </location>
    <ligand>
        <name>CoA</name>
        <dbReference type="ChEBI" id="CHEBI:57287"/>
    </ligand>
</feature>
<feature type="binding site" evidence="1">
    <location>
        <position position="335"/>
    </location>
    <ligand>
        <name>CoA</name>
        <dbReference type="ChEBI" id="CHEBI:57287"/>
    </ligand>
</feature>
<feature type="binding site" evidence="1">
    <location>
        <begin position="387"/>
        <end position="389"/>
    </location>
    <ligand>
        <name>ATP</name>
        <dbReference type="ChEBI" id="CHEBI:30616"/>
    </ligand>
</feature>
<feature type="binding site" evidence="1">
    <location>
        <begin position="411"/>
        <end position="416"/>
    </location>
    <ligand>
        <name>ATP</name>
        <dbReference type="ChEBI" id="CHEBI:30616"/>
    </ligand>
</feature>
<feature type="binding site" evidence="1">
    <location>
        <position position="500"/>
    </location>
    <ligand>
        <name>ATP</name>
        <dbReference type="ChEBI" id="CHEBI:30616"/>
    </ligand>
</feature>
<feature type="binding site" evidence="1">
    <location>
        <position position="515"/>
    </location>
    <ligand>
        <name>ATP</name>
        <dbReference type="ChEBI" id="CHEBI:30616"/>
    </ligand>
</feature>
<feature type="binding site" evidence="1">
    <location>
        <position position="523"/>
    </location>
    <ligand>
        <name>CoA</name>
        <dbReference type="ChEBI" id="CHEBI:57287"/>
    </ligand>
</feature>
<feature type="binding site" evidence="1">
    <location>
        <position position="526"/>
    </location>
    <ligand>
        <name>ATP</name>
        <dbReference type="ChEBI" id="CHEBI:30616"/>
    </ligand>
</feature>
<feature type="binding site" evidence="1">
    <location>
        <position position="537"/>
    </location>
    <ligand>
        <name>Mg(2+)</name>
        <dbReference type="ChEBI" id="CHEBI:18420"/>
    </ligand>
</feature>
<feature type="binding site" evidence="1">
    <location>
        <position position="539"/>
    </location>
    <ligand>
        <name>Mg(2+)</name>
        <dbReference type="ChEBI" id="CHEBI:18420"/>
    </ligand>
</feature>
<feature type="binding site" evidence="1">
    <location>
        <position position="542"/>
    </location>
    <ligand>
        <name>Mg(2+)</name>
        <dbReference type="ChEBI" id="CHEBI:18420"/>
    </ligand>
</feature>
<feature type="binding site">
    <location>
        <position position="586"/>
    </location>
    <ligand>
        <name>CoA</name>
        <dbReference type="ChEBI" id="CHEBI:57287"/>
    </ligand>
</feature>
<feature type="modified residue" description="N6-acetyllysine" evidence="1">
    <location>
        <position position="611"/>
    </location>
</feature>
<evidence type="ECO:0000255" key="1">
    <source>
        <dbReference type="HAMAP-Rule" id="MF_01123"/>
    </source>
</evidence>
<accession>B2S7N5</accession>
<sequence length="651" mass="72731">MSEKLYPVLPEAKKNTLIDNETYLEWYEESVSDPDGFWAKHGRRIDWFKPFTKVKNTDFNGDVTIKWYEDGVTNVSYNCIDRHLKSRGDKVAIIWEGDNPYIDKKITYRELYENVCRMANVLKKHGVKKGDRVTIYLPMIPEAAYAMLACARIGAVHSVVFAGFSPEALAGRIVDCESTFVITADEGVRGGKPVALKENTDTAIDIAAKQYVMVNKVLVVRRTGGKVSWGRGRDLWYHQEVASVEPHCEPEPMNAEDPLFILYTSGSTGKPKGVLHTTGGYLVYASMTHQYVFDYHDGEIYWCTADVGWVTGHSYIVYGPLANGATTLMFEGVPNFPDQGRFWEVVDKHHVNIFYTAPTALRALMGAGDEFVTRSSRSTLRLLGSVGEPINPEAWEWYYNVVGDQKCPIVDTWWQTENGGILITPLPGATDLKPGSATRPFFGVKPVLVDNEGNVQEGVADGNLCISDSWPGQMRTVYGDHKRFIETYFSTYKGMYFSGDGCRRDEDGYYWITGRVDDVLNISGHRLGTAEIESALVSHHSVSEAAVVGYPHPIKGQGIYCYVTLMTGADAQDPDELRKELVQHVRKEIGPIATPDKIQFAPGLPKTRSGKIMRRILRKIAEDEFGALGDTSTLADPGVVDDLIENRQNKK</sequence>